<dbReference type="EC" id="3.4.24.-"/>
<dbReference type="EMBL" id="AF367868">
    <property type="protein sequence ID" value="AAK73517.1"/>
    <property type="molecule type" value="mRNA"/>
</dbReference>
<dbReference type="EMBL" id="AF054626">
    <property type="protein sequence ID" value="AAC08997.1"/>
    <property type="molecule type" value="mRNA"/>
</dbReference>
<dbReference type="PIR" id="A59409">
    <property type="entry name" value="A59409"/>
</dbReference>
<dbReference type="PDB" id="1L3X">
    <property type="method" value="NMR"/>
    <property type="chains" value="A=245-317"/>
</dbReference>
<dbReference type="PDBsum" id="1L3X"/>
<dbReference type="SMR" id="Q90WC0"/>
<dbReference type="MEROPS" id="M12.326"/>
<dbReference type="EvolutionaryTrace" id="Q90WC0"/>
<dbReference type="GO" id="GO:0005576">
    <property type="term" value="C:extracellular region"/>
    <property type="evidence" value="ECO:0007669"/>
    <property type="project" value="UniProtKB-SubCell"/>
</dbReference>
<dbReference type="GO" id="GO:0005886">
    <property type="term" value="C:plasma membrane"/>
    <property type="evidence" value="ECO:0007669"/>
    <property type="project" value="TreeGrafter"/>
</dbReference>
<dbReference type="GO" id="GO:0046872">
    <property type="term" value="F:metal ion binding"/>
    <property type="evidence" value="ECO:0007669"/>
    <property type="project" value="UniProtKB-KW"/>
</dbReference>
<dbReference type="GO" id="GO:0004222">
    <property type="term" value="F:metalloendopeptidase activity"/>
    <property type="evidence" value="ECO:0007669"/>
    <property type="project" value="InterPro"/>
</dbReference>
<dbReference type="GO" id="GO:0090729">
    <property type="term" value="F:toxin activity"/>
    <property type="evidence" value="ECO:0007669"/>
    <property type="project" value="UniProtKB-KW"/>
</dbReference>
<dbReference type="GO" id="GO:0006508">
    <property type="term" value="P:proteolysis"/>
    <property type="evidence" value="ECO:0007669"/>
    <property type="project" value="UniProtKB-KW"/>
</dbReference>
<dbReference type="CDD" id="cd04269">
    <property type="entry name" value="ZnMc_adamalysin_II_like"/>
    <property type="match status" value="1"/>
</dbReference>
<dbReference type="FunFam" id="3.40.390.10:FF:000002">
    <property type="entry name" value="Disintegrin and metalloproteinase domain-containing protein 22"/>
    <property type="match status" value="1"/>
</dbReference>
<dbReference type="FunFam" id="4.10.70.10:FF:000005">
    <property type="entry name" value="Zinc metalloproteinase/disintegrin"/>
    <property type="match status" value="1"/>
</dbReference>
<dbReference type="Gene3D" id="3.40.390.10">
    <property type="entry name" value="Collagenase (Catalytic Domain)"/>
    <property type="match status" value="1"/>
</dbReference>
<dbReference type="Gene3D" id="4.10.70.10">
    <property type="entry name" value="Disintegrin domain"/>
    <property type="match status" value="1"/>
</dbReference>
<dbReference type="InterPro" id="IPR018358">
    <property type="entry name" value="Disintegrin_CS"/>
</dbReference>
<dbReference type="InterPro" id="IPR001762">
    <property type="entry name" value="Disintegrin_dom"/>
</dbReference>
<dbReference type="InterPro" id="IPR036436">
    <property type="entry name" value="Disintegrin_dom_sf"/>
</dbReference>
<dbReference type="InterPro" id="IPR024079">
    <property type="entry name" value="MetalloPept_cat_dom_sf"/>
</dbReference>
<dbReference type="InterPro" id="IPR001590">
    <property type="entry name" value="Peptidase_M12B"/>
</dbReference>
<dbReference type="InterPro" id="IPR034027">
    <property type="entry name" value="Reprolysin_adamalysin"/>
</dbReference>
<dbReference type="PANTHER" id="PTHR11905">
    <property type="entry name" value="ADAM A DISINTEGRIN AND METALLOPROTEASE DOMAIN"/>
    <property type="match status" value="1"/>
</dbReference>
<dbReference type="PANTHER" id="PTHR11905:SF32">
    <property type="entry name" value="DISINTEGRIN AND METALLOPROTEINASE DOMAIN-CONTAINING PROTEIN 28"/>
    <property type="match status" value="1"/>
</dbReference>
<dbReference type="Pfam" id="PF00200">
    <property type="entry name" value="Disintegrin"/>
    <property type="match status" value="1"/>
</dbReference>
<dbReference type="Pfam" id="PF01421">
    <property type="entry name" value="Reprolysin"/>
    <property type="match status" value="1"/>
</dbReference>
<dbReference type="PRINTS" id="PR00289">
    <property type="entry name" value="DISINTEGRIN"/>
</dbReference>
<dbReference type="SMART" id="SM00050">
    <property type="entry name" value="DISIN"/>
    <property type="match status" value="1"/>
</dbReference>
<dbReference type="SUPFAM" id="SSF57552">
    <property type="entry name" value="Blood coagulation inhibitor (disintegrin)"/>
    <property type="match status" value="1"/>
</dbReference>
<dbReference type="SUPFAM" id="SSF55486">
    <property type="entry name" value="Metalloproteases ('zincins'), catalytic domain"/>
    <property type="match status" value="1"/>
</dbReference>
<dbReference type="PROSITE" id="PS50215">
    <property type="entry name" value="ADAM_MEPRO"/>
    <property type="match status" value="1"/>
</dbReference>
<dbReference type="PROSITE" id="PS00427">
    <property type="entry name" value="DISINTEGRIN_1"/>
    <property type="match status" value="1"/>
</dbReference>
<dbReference type="PROSITE" id="PS50214">
    <property type="entry name" value="DISINTEGRIN_2"/>
    <property type="match status" value="1"/>
</dbReference>
<dbReference type="PROSITE" id="PS00142">
    <property type="entry name" value="ZINC_PROTEASE"/>
    <property type="match status" value="1"/>
</dbReference>
<sequence>EAPKMCGVTQNWESYEPIKKASQSNLTPAHQRYIELVIVADHGMFTKYNGDSDKIREWVRQMVNTVDEIYSYMYIDVALAGLEIWSNEDLINVQPAAPHTLDSFGKWRERDLLHRIHHDNAMLLTAIDFDGPTIGLAYVGTMCKPKGSTGVVQDHSTINLRVAVTMAHEIGHNLGIHHDTGSCSCGGYSCIMSPVISHEPSKYFSDCSYTQCWDFIMNQKPQCILNKPLRTDTVSTPVSGNELLEAGEECDCGSPGNPCCDAATCKLRQGAQCAEGLCCDQCRFMKEGTICRRARGDDLDDYCNGISAGCPRNPFHA</sequence>
<reference key="1">
    <citation type="submission" date="2001-04" db="EMBL/GenBank/DDBJ databases">
        <authorList>
            <person name="Xilian H."/>
        </authorList>
    </citation>
    <scope>NUCLEOTIDE SEQUENCE [MRNA]</scope>
    <source>
        <tissue>Venom gland</tissue>
    </source>
</reference>
<reference key="2">
    <citation type="journal article" date="1998" name="Thromb. Res.">
        <title>Purification and molecular cloning of a platelet aggregation inhibitor from the snake (Agkistrodon halys brevicaudus) venom.</title>
        <authorList>
            <person name="Kang I.-C."/>
            <person name="Chung K.-H."/>
            <person name="Lee S.-J."/>
            <person name="Yun Y."/>
            <person name="Moon H.-M."/>
            <person name="Kim D.-S."/>
        </authorList>
    </citation>
    <scope>NUCLEOTIDE SEQUENCE [MRNA] OF 213-317</scope>
    <scope>PROTEIN SEQUENCE OF 245-317</scope>
    <scope>FUNCTION</scope>
    <scope>SUBUNIT</scope>
    <scope>MASS SPECTROMETRY</scope>
    <source>
        <tissue>Venom</tissue>
        <tissue>Venom gland</tissue>
    </source>
</reference>
<reference key="3">
    <citation type="journal article" date="2000" name="Fukuoka Univ. Sci. Rep.">
        <title>Isolation and primary structures of platelet aggregation inhibitors from Gloydius halys brevicaudus venom.</title>
        <authorList>
            <person name="Oshikawa K."/>
            <person name="Yasukouchi Y."/>
            <person name="Terada S."/>
        </authorList>
    </citation>
    <scope>PROTEIN SEQUENCE OF 247-317</scope>
    <scope>FUNCTION</scope>
    <source>
        <tissue>Venom</tissue>
    </source>
</reference>
<reference key="4">
    <citation type="journal article" date="1998" name="Mol. Cells">
        <title>Cloning and characterization of novel disintegrins from Agkistrodon halys venom.</title>
        <authorList>
            <person name="Park D.-S."/>
            <person name="Kang I.-C."/>
            <person name="Kim H.-D."/>
            <person name="Chung K.-H."/>
            <person name="Kim D.-S."/>
            <person name="Yun Y.-D."/>
        </authorList>
    </citation>
    <scope>FUNCTION</scope>
</reference>
<reference key="5">
    <citation type="journal article" date="1999" name="Cancer Res.">
        <title>A novel disintegrin salmosin inhibits tumor angiogenesis.</title>
        <authorList>
            <person name="Kang I.-C."/>
            <person name="Lee Y.D."/>
            <person name="Kim D.-S."/>
        </authorList>
    </citation>
    <scope>FUNCTION ON ANGIOGENESIS</scope>
</reference>
<reference key="6">
    <citation type="journal article" date="2000" name="Biochem. Biophys. Res. Commun.">
        <title>Suppressive mechanism of salmosin, a novel disintegrin in B16 melanoma cell metastasis.</title>
        <authorList>
            <person name="Kang I.-C."/>
            <person name="Kim D.-S."/>
            <person name="Jang Y."/>
            <person name="Chung K.-H."/>
        </authorList>
    </citation>
    <scope>FUNCTION ON MELANOMA CELL METASTASIS</scope>
</reference>
<reference key="7">
    <citation type="journal article" date="2003" name="Biochem. Biophys. Res. Commun.">
        <title>The snake venom disintegrin salmosin induces apoptosis by disassembly of focal adhesions in bovine capillary endothelial cells.</title>
        <authorList>
            <person name="Hong S.Y."/>
            <person name="Lee H."/>
            <person name="You W.K."/>
            <person name="Chung K.H."/>
            <person name="Kim D.S."/>
            <person name="Song K."/>
        </authorList>
    </citation>
    <scope>FUNCTION</scope>
    <scope>BINDING TO ITGAV/ITGB3</scope>
</reference>
<reference key="8">
    <citation type="journal article" date="2004" name="Oncol. Res.">
        <title>Inhibition of angiogenesis by salmosin expressed in vitro.</title>
        <authorList>
            <person name="Kim S.I."/>
            <person name="Kim K.S."/>
            <person name="Kim H.S."/>
            <person name="Choi M.M."/>
            <person name="Kim D.-S."/>
            <person name="Chung K.-H."/>
            <person name="Park Y.S."/>
        </authorList>
    </citation>
    <scope>FUNCTION ON ANGIOGENESIS</scope>
</reference>
<reference key="9">
    <citation type="journal article" date="2003" name="Biochemistry">
        <title>Solution structure of a novel disintegrin, salmosin, from Agkistrondon halys venom.</title>
        <authorList>
            <person name="Shin J."/>
            <person name="Hong S.-Y."/>
            <person name="Chung K.-H."/>
            <person name="Kang I.-C."/>
            <person name="Jang Y."/>
            <person name="Kim D.-S."/>
            <person name="Lee W."/>
        </authorList>
    </citation>
    <scope>STRUCTURE BY NMR OF 245-317</scope>
    <scope>DISULFIDE BONDS</scope>
    <source>
        <tissue>Venom</tissue>
    </source>
</reference>
<evidence type="ECO:0000250" key="1"/>
<evidence type="ECO:0000255" key="2">
    <source>
        <dbReference type="PROSITE-ProRule" id="PRU00068"/>
    </source>
</evidence>
<evidence type="ECO:0000255" key="3">
    <source>
        <dbReference type="PROSITE-ProRule" id="PRU00276"/>
    </source>
</evidence>
<evidence type="ECO:0000269" key="4">
    <source>
    </source>
</evidence>
<evidence type="ECO:0000269" key="5">
    <source>
    </source>
</evidence>
<evidence type="ECO:0000269" key="6">
    <source>
    </source>
</evidence>
<evidence type="ECO:0000269" key="7">
    <source>
    </source>
</evidence>
<evidence type="ECO:0000269" key="8">
    <source>
    </source>
</evidence>
<evidence type="ECO:0000269" key="9">
    <source>
    </source>
</evidence>
<evidence type="ECO:0000269" key="10">
    <source>
    </source>
</evidence>
<evidence type="ECO:0000269" key="11">
    <source ref="3"/>
</evidence>
<evidence type="ECO:0000305" key="12"/>
<evidence type="ECO:0007744" key="13">
    <source>
        <dbReference type="PDB" id="1L3X"/>
    </source>
</evidence>
<evidence type="ECO:0007829" key="14">
    <source>
        <dbReference type="PDB" id="1L3X"/>
    </source>
</evidence>
<proteinExistence type="evidence at protein level"/>
<comment type="function">
    <molecule>Snake venom metalloproteinase brevilysin L4</molecule>
    <text evidence="1 4 5 6 8 9 10 11">metalloproteinase that impairs hemostasis in the envenomed animal.</text>
</comment>
<comment type="function">
    <molecule>Disintegrin salmosin-1</molecule>
    <text>Inhibits GPIIb/GPIIIa (ITGA2B/ITGB3) binding to immobilized fibrinogen with an IC(50) of 2.2 nM and ADP-induced platelet aggregation with an IC(50) of 131 nM, respectively. Inhibits angiogenesis. By binding to vitronectin receptor (alpha-V/beta-3 (ITGAV/ITGB3)), also induces apoptosis of endothelial cells by blocking their attachment to extracellular matrix proteins.</text>
</comment>
<comment type="function">
    <molecule>Disintegrin salmosin-1 minor component</molecule>
    <text>Inhibits platelet aggregation induced by ADP (IC(50) is 30 nM), collagen (IC(50) is 500 nM), thrombin and epinephrin (IC(50) is 160 nM).</text>
</comment>
<comment type="cofactor">
    <cofactor evidence="1">
        <name>Zn(2+)</name>
        <dbReference type="ChEBI" id="CHEBI:29105"/>
    </cofactor>
    <text evidence="1">Binds 1 zinc ion per subunit.</text>
</comment>
<comment type="subunit">
    <text evidence="9">Monomer.</text>
</comment>
<comment type="subcellular location">
    <subcellularLocation>
        <location>Secreted</location>
    </subcellularLocation>
</comment>
<comment type="tissue specificity">
    <text>Expressed by the venom gland.</text>
</comment>
<comment type="mass spectrometry">
    <molecule>Disintegrin salmosin-1</molecule>
</comment>
<comment type="mass spectrometry">
    <molecule>Disintegrin salmosin-1 minor component</molecule>
</comment>
<comment type="miscellaneous">
    <text>The disintegrin belongs to the medium disintegrin subfamily.</text>
</comment>
<comment type="similarity">
    <text evidence="12">Belongs to the venom metalloproteinase (M12B) family. P-II subfamily. P-IIa sub-subfamily.</text>
</comment>
<comment type="caution">
    <text evidence="12">The metalloprotease is also encoded by another precursor (AC Q698K8).</text>
</comment>
<protein>
    <recommendedName>
        <fullName>Zinc metalloproteinase/disintegrin</fullName>
    </recommendedName>
    <component>
        <recommendedName>
            <fullName>Snake venom metalloproteinase brevilysin L4</fullName>
            <shortName>SVMP</shortName>
        </recommendedName>
        <alternativeName>
            <fullName>Snake venom metalloproteinase hxl-1</fullName>
            <ecNumber>3.4.24.-</ecNumber>
        </alternativeName>
    </component>
    <component>
        <recommendedName>
            <fullName>Disintegrin salmosin-1</fullName>
        </recommendedName>
        <alternativeName>
            <fullName>Platelet aggregation inhibitor</fullName>
        </alternativeName>
    </component>
    <component>
        <recommendedName>
            <fullName>Disintegrin salmosin-1 minor component</fullName>
        </recommendedName>
        <alternativeName>
            <fullName>Disintegrin brevicaudin-2b</fullName>
        </alternativeName>
    </component>
</protein>
<name>VM2HS_GLOBR</name>
<keyword id="KW-0002">3D-structure</keyword>
<keyword id="KW-0106">Calcium</keyword>
<keyword id="KW-1217">Cell adhesion impairing toxin</keyword>
<keyword id="KW-0903">Direct protein sequencing</keyword>
<keyword id="KW-1015">Disulfide bond</keyword>
<keyword id="KW-1199">Hemostasis impairing toxin</keyword>
<keyword id="KW-0378">Hydrolase</keyword>
<keyword id="KW-0479">Metal-binding</keyword>
<keyword id="KW-0482">Metalloprotease</keyword>
<keyword id="KW-1201">Platelet aggregation inhibiting toxin</keyword>
<keyword id="KW-0645">Protease</keyword>
<keyword id="KW-0964">Secreted</keyword>
<keyword id="KW-0800">Toxin</keyword>
<keyword id="KW-0862">Zinc</keyword>
<keyword id="KW-0865">Zymogen</keyword>
<feature type="propeptide" id="PRO_0000317493" evidence="1">
    <location>
        <begin position="1" status="less than"/>
        <end position="26"/>
    </location>
</feature>
<feature type="chain" id="PRO_0000317494" description="Snake venom metalloproteinase brevilysin L4">
    <location>
        <begin position="27"/>
        <end position="228"/>
    </location>
</feature>
<feature type="propeptide" id="PRO_0000317495" evidence="1">
    <location>
        <begin position="229"/>
        <end position="244"/>
    </location>
</feature>
<feature type="chain" id="PRO_0000317496" description="Disintegrin salmosin-1">
    <location>
        <begin position="245"/>
        <end position="317"/>
    </location>
</feature>
<feature type="chain" id="PRO_0000317497" description="Disintegrin salmosin-1 minor component">
    <location>
        <begin position="247"/>
        <end position="317"/>
    </location>
</feature>
<feature type="domain" description="Peptidase M12B" evidence="3">
    <location>
        <begin position="32"/>
        <end position="228"/>
    </location>
</feature>
<feature type="domain" description="Disintegrin" evidence="2">
    <location>
        <begin position="236"/>
        <end position="317"/>
    </location>
</feature>
<feature type="short sequence motif" description="Cell attachment site">
    <location>
        <begin position="295"/>
        <end position="297"/>
    </location>
</feature>
<feature type="active site" evidence="3">
    <location>
        <position position="169"/>
    </location>
</feature>
<feature type="binding site" evidence="1">
    <location>
        <position position="35"/>
    </location>
    <ligand>
        <name>Ca(2+)</name>
        <dbReference type="ChEBI" id="CHEBI:29108"/>
    </ligand>
</feature>
<feature type="binding site" evidence="1">
    <location>
        <position position="119"/>
    </location>
    <ligand>
        <name>Ca(2+)</name>
        <dbReference type="ChEBI" id="CHEBI:29108"/>
    </ligand>
</feature>
<feature type="binding site" evidence="3">
    <location>
        <position position="168"/>
    </location>
    <ligand>
        <name>Zn(2+)</name>
        <dbReference type="ChEBI" id="CHEBI:29105"/>
        <note>catalytic</note>
    </ligand>
</feature>
<feature type="binding site" evidence="3">
    <location>
        <position position="172"/>
    </location>
    <ligand>
        <name>Zn(2+)</name>
        <dbReference type="ChEBI" id="CHEBI:29105"/>
        <note>catalytic</note>
    </ligand>
</feature>
<feature type="binding site" evidence="3">
    <location>
        <position position="178"/>
    </location>
    <ligand>
        <name>Zn(2+)</name>
        <dbReference type="ChEBI" id="CHEBI:29105"/>
        <note>catalytic</note>
    </ligand>
</feature>
<feature type="binding site" evidence="1">
    <location>
        <position position="223"/>
    </location>
    <ligand>
        <name>Ca(2+)</name>
        <dbReference type="ChEBI" id="CHEBI:29108"/>
    </ligand>
</feature>
<feature type="binding site" evidence="1">
    <location>
        <position position="226"/>
    </location>
    <ligand>
        <name>Ca(2+)</name>
        <dbReference type="ChEBI" id="CHEBI:29108"/>
    </ligand>
</feature>
<feature type="disulfide bond" evidence="3">
    <location>
        <begin position="143"/>
        <end position="223"/>
    </location>
</feature>
<feature type="disulfide bond" evidence="3">
    <location>
        <begin position="183"/>
        <end position="207"/>
    </location>
</feature>
<feature type="disulfide bond" evidence="3">
    <location>
        <begin position="185"/>
        <end position="190"/>
    </location>
</feature>
<feature type="disulfide bond" evidence="7 13">
    <location>
        <begin position="250"/>
        <end position="259"/>
    </location>
</feature>
<feature type="disulfide bond" evidence="7 13">
    <location>
        <begin position="252"/>
        <end position="260"/>
    </location>
</feature>
<feature type="disulfide bond" evidence="7 13">
    <location>
        <begin position="265"/>
        <end position="279"/>
    </location>
</feature>
<feature type="disulfide bond" evidence="7 13">
    <location>
        <begin position="273"/>
        <end position="303"/>
    </location>
</feature>
<feature type="disulfide bond" evidence="7 13">
    <location>
        <begin position="278"/>
        <end position="282"/>
    </location>
</feature>
<feature type="disulfide bond" evidence="2 7 13">
    <location>
        <begin position="291"/>
        <end position="310"/>
    </location>
</feature>
<feature type="non-terminal residue" evidence="12">
    <location>
        <position position="1"/>
    </location>
</feature>
<feature type="strand" evidence="14">
    <location>
        <begin position="247"/>
        <end position="249"/>
    </location>
</feature>
<feature type="strand" evidence="14">
    <location>
        <begin position="286"/>
        <end position="289"/>
    </location>
</feature>
<feature type="strand" evidence="14">
    <location>
        <begin position="307"/>
        <end position="309"/>
    </location>
</feature>
<organism>
    <name type="scientific">Gloydius brevicauda</name>
    <name type="common">Korean slamosa snake</name>
    <name type="synonym">Agkistrodon halys brevicaudus</name>
    <dbReference type="NCBI Taxonomy" id="3148161"/>
    <lineage>
        <taxon>Eukaryota</taxon>
        <taxon>Metazoa</taxon>
        <taxon>Chordata</taxon>
        <taxon>Craniata</taxon>
        <taxon>Vertebrata</taxon>
        <taxon>Euteleostomi</taxon>
        <taxon>Lepidosauria</taxon>
        <taxon>Squamata</taxon>
        <taxon>Bifurcata</taxon>
        <taxon>Unidentata</taxon>
        <taxon>Episquamata</taxon>
        <taxon>Toxicofera</taxon>
        <taxon>Serpentes</taxon>
        <taxon>Colubroidea</taxon>
        <taxon>Viperidae</taxon>
        <taxon>Crotalinae</taxon>
        <taxon>Gloydius</taxon>
    </lineage>
</organism>
<accession>Q90WC0</accession>
<accession>Q78CP2</accession>